<proteinExistence type="inferred from homology"/>
<sequence>MAGHSKWANIKHKKAAADAKRGKIWTRLIKEITVAARLGGGDADSNPRLRLAMDKATDANMPKDNINRAIQRGVGGLEGANYEEIRYEGYGINGAAVIVDCLTDNRTRTVAEVRHGFDKYGGNMGTSGSVAFLFDHIGQFIFAPGTPEDKLMDAALEAGADDVITHDDGSLEVICPPHDFAKVKTALEAAGFKAELAEVIMKPQTEVVFTGEDAVKMQKLLDVLENLDDVQEVFTNAVIGE</sequence>
<organism>
    <name type="scientific">Ralstonia pickettii (strain 12J)</name>
    <dbReference type="NCBI Taxonomy" id="402626"/>
    <lineage>
        <taxon>Bacteria</taxon>
        <taxon>Pseudomonadati</taxon>
        <taxon>Pseudomonadota</taxon>
        <taxon>Betaproteobacteria</taxon>
        <taxon>Burkholderiales</taxon>
        <taxon>Burkholderiaceae</taxon>
        <taxon>Ralstonia</taxon>
    </lineage>
</organism>
<accession>B2U8Z2</accession>
<gene>
    <name type="ordered locus">Rpic_2388</name>
</gene>
<reference key="1">
    <citation type="submission" date="2008-05" db="EMBL/GenBank/DDBJ databases">
        <title>Complete sequence of chromosome 1 of Ralstonia pickettii 12J.</title>
        <authorList>
            <person name="Lucas S."/>
            <person name="Copeland A."/>
            <person name="Lapidus A."/>
            <person name="Glavina del Rio T."/>
            <person name="Dalin E."/>
            <person name="Tice H."/>
            <person name="Bruce D."/>
            <person name="Goodwin L."/>
            <person name="Pitluck S."/>
            <person name="Meincke L."/>
            <person name="Brettin T."/>
            <person name="Detter J.C."/>
            <person name="Han C."/>
            <person name="Kuske C.R."/>
            <person name="Schmutz J."/>
            <person name="Larimer F."/>
            <person name="Land M."/>
            <person name="Hauser L."/>
            <person name="Kyrpides N."/>
            <person name="Mikhailova N."/>
            <person name="Marsh T."/>
            <person name="Richardson P."/>
        </authorList>
    </citation>
    <scope>NUCLEOTIDE SEQUENCE [LARGE SCALE GENOMIC DNA]</scope>
    <source>
        <strain>12J</strain>
    </source>
</reference>
<protein>
    <recommendedName>
        <fullName evidence="1">Probable transcriptional regulatory protein Rpic_2388</fullName>
    </recommendedName>
</protein>
<keyword id="KW-0963">Cytoplasm</keyword>
<keyword id="KW-0238">DNA-binding</keyword>
<keyword id="KW-0804">Transcription</keyword>
<keyword id="KW-0805">Transcription regulation</keyword>
<feature type="chain" id="PRO_1000132231" description="Probable transcriptional regulatory protein Rpic_2388">
    <location>
        <begin position="1"/>
        <end position="241"/>
    </location>
</feature>
<evidence type="ECO:0000255" key="1">
    <source>
        <dbReference type="HAMAP-Rule" id="MF_00693"/>
    </source>
</evidence>
<name>Y2388_RALPJ</name>
<dbReference type="EMBL" id="CP001068">
    <property type="protein sequence ID" value="ACD27522.1"/>
    <property type="molecule type" value="Genomic_DNA"/>
</dbReference>
<dbReference type="SMR" id="B2U8Z2"/>
<dbReference type="STRING" id="402626.Rpic_2388"/>
<dbReference type="KEGG" id="rpi:Rpic_2388"/>
<dbReference type="eggNOG" id="COG0217">
    <property type="taxonomic scope" value="Bacteria"/>
</dbReference>
<dbReference type="HOGENOM" id="CLU_062974_2_2_4"/>
<dbReference type="GO" id="GO:0005829">
    <property type="term" value="C:cytosol"/>
    <property type="evidence" value="ECO:0007669"/>
    <property type="project" value="TreeGrafter"/>
</dbReference>
<dbReference type="GO" id="GO:0003677">
    <property type="term" value="F:DNA binding"/>
    <property type="evidence" value="ECO:0007669"/>
    <property type="project" value="UniProtKB-UniRule"/>
</dbReference>
<dbReference type="GO" id="GO:0006355">
    <property type="term" value="P:regulation of DNA-templated transcription"/>
    <property type="evidence" value="ECO:0007669"/>
    <property type="project" value="UniProtKB-UniRule"/>
</dbReference>
<dbReference type="FunFam" id="1.10.10.200:FF:000001">
    <property type="entry name" value="Probable transcriptional regulatory protein YebC"/>
    <property type="match status" value="1"/>
</dbReference>
<dbReference type="FunFam" id="3.30.70.980:FF:000002">
    <property type="entry name" value="Probable transcriptional regulatory protein YebC"/>
    <property type="match status" value="1"/>
</dbReference>
<dbReference type="Gene3D" id="1.10.10.200">
    <property type="match status" value="1"/>
</dbReference>
<dbReference type="Gene3D" id="3.30.70.980">
    <property type="match status" value="2"/>
</dbReference>
<dbReference type="HAMAP" id="MF_00693">
    <property type="entry name" value="Transcrip_reg_TACO1"/>
    <property type="match status" value="1"/>
</dbReference>
<dbReference type="InterPro" id="IPR017856">
    <property type="entry name" value="Integrase-like_N"/>
</dbReference>
<dbReference type="InterPro" id="IPR048300">
    <property type="entry name" value="TACO1_YebC-like_2nd/3rd_dom"/>
</dbReference>
<dbReference type="InterPro" id="IPR049083">
    <property type="entry name" value="TACO1_YebC_N"/>
</dbReference>
<dbReference type="InterPro" id="IPR002876">
    <property type="entry name" value="Transcrip_reg_TACO1-like"/>
</dbReference>
<dbReference type="InterPro" id="IPR026564">
    <property type="entry name" value="Transcrip_reg_TACO1-like_dom3"/>
</dbReference>
<dbReference type="InterPro" id="IPR029072">
    <property type="entry name" value="YebC-like"/>
</dbReference>
<dbReference type="NCBIfam" id="NF001030">
    <property type="entry name" value="PRK00110.1"/>
    <property type="match status" value="1"/>
</dbReference>
<dbReference type="NCBIfam" id="NF009044">
    <property type="entry name" value="PRK12378.1"/>
    <property type="match status" value="1"/>
</dbReference>
<dbReference type="NCBIfam" id="TIGR01033">
    <property type="entry name" value="YebC/PmpR family DNA-binding transcriptional regulator"/>
    <property type="match status" value="1"/>
</dbReference>
<dbReference type="PANTHER" id="PTHR12532:SF6">
    <property type="entry name" value="TRANSCRIPTIONAL REGULATORY PROTEIN YEBC-RELATED"/>
    <property type="match status" value="1"/>
</dbReference>
<dbReference type="PANTHER" id="PTHR12532">
    <property type="entry name" value="TRANSLATIONAL ACTIVATOR OF CYTOCHROME C OXIDASE 1"/>
    <property type="match status" value="1"/>
</dbReference>
<dbReference type="Pfam" id="PF20772">
    <property type="entry name" value="TACO1_YebC_N"/>
    <property type="match status" value="1"/>
</dbReference>
<dbReference type="Pfam" id="PF01709">
    <property type="entry name" value="Transcrip_reg"/>
    <property type="match status" value="1"/>
</dbReference>
<dbReference type="SUPFAM" id="SSF75625">
    <property type="entry name" value="YebC-like"/>
    <property type="match status" value="1"/>
</dbReference>
<comment type="subcellular location">
    <subcellularLocation>
        <location evidence="1">Cytoplasm</location>
    </subcellularLocation>
</comment>
<comment type="similarity">
    <text evidence="1">Belongs to the TACO1 family.</text>
</comment>